<name>RS4_RHORT</name>
<keyword id="KW-1185">Reference proteome</keyword>
<keyword id="KW-0687">Ribonucleoprotein</keyword>
<keyword id="KW-0689">Ribosomal protein</keyword>
<keyword id="KW-0694">RNA-binding</keyword>
<keyword id="KW-0699">rRNA-binding</keyword>
<accession>Q2RWJ0</accession>
<sequence length="204" mass="23637">MGKRLNSKHKIDRRLGVNLWGRPKSPINKREYGPGEHGQRRRKPSDFGIQLMAKQKLKGYYGNISEKAFRKYYEEASSRRGDTSENLISILETRLDAVVYRMKIVPTVFSSRQIINHGHILVNGRRVSVASYRVQEGDVIEVKEKSRQMPLILEALQSHERDIPEYITMDLAHAKGTFLRAPKLEDVPYPVQMEPNLVVEFYSR</sequence>
<proteinExistence type="inferred from homology"/>
<protein>
    <recommendedName>
        <fullName evidence="1">Small ribosomal subunit protein uS4</fullName>
    </recommendedName>
    <alternativeName>
        <fullName evidence="3">30S ribosomal protein S4</fullName>
    </alternativeName>
</protein>
<gene>
    <name evidence="1" type="primary">rpsD</name>
    <name type="ordered locus">Rru_A0701</name>
</gene>
<evidence type="ECO:0000255" key="1">
    <source>
        <dbReference type="HAMAP-Rule" id="MF_01306"/>
    </source>
</evidence>
<evidence type="ECO:0000256" key="2">
    <source>
        <dbReference type="SAM" id="MobiDB-lite"/>
    </source>
</evidence>
<evidence type="ECO:0000305" key="3"/>
<comment type="function">
    <text evidence="1">One of the primary rRNA binding proteins, it binds directly to 16S rRNA where it nucleates assembly of the body of the 30S subunit.</text>
</comment>
<comment type="function">
    <text evidence="1">With S5 and S12 plays an important role in translational accuracy.</text>
</comment>
<comment type="subunit">
    <text evidence="1">Part of the 30S ribosomal subunit. Contacts protein S5. The interaction surface between S4 and S5 is involved in control of translational fidelity.</text>
</comment>
<comment type="similarity">
    <text evidence="1">Belongs to the universal ribosomal protein uS4 family.</text>
</comment>
<organism>
    <name type="scientific">Rhodospirillum rubrum (strain ATCC 11170 / ATH 1.1.1 / DSM 467 / LMG 4362 / NCIMB 8255 / S1)</name>
    <dbReference type="NCBI Taxonomy" id="269796"/>
    <lineage>
        <taxon>Bacteria</taxon>
        <taxon>Pseudomonadati</taxon>
        <taxon>Pseudomonadota</taxon>
        <taxon>Alphaproteobacteria</taxon>
        <taxon>Rhodospirillales</taxon>
        <taxon>Rhodospirillaceae</taxon>
        <taxon>Rhodospirillum</taxon>
    </lineage>
</organism>
<feature type="chain" id="PRO_0000228921" description="Small ribosomal subunit protein uS4">
    <location>
        <begin position="1"/>
        <end position="204"/>
    </location>
</feature>
<feature type="domain" description="S4 RNA-binding" evidence="1">
    <location>
        <begin position="93"/>
        <end position="156"/>
    </location>
</feature>
<feature type="region of interest" description="Disordered" evidence="2">
    <location>
        <begin position="20"/>
        <end position="46"/>
    </location>
</feature>
<feature type="compositionally biased region" description="Basic and acidic residues" evidence="2">
    <location>
        <begin position="28"/>
        <end position="38"/>
    </location>
</feature>
<dbReference type="EMBL" id="CP000230">
    <property type="protein sequence ID" value="ABC21505.1"/>
    <property type="molecule type" value="Genomic_DNA"/>
</dbReference>
<dbReference type="RefSeq" id="WP_011388459.1">
    <property type="nucleotide sequence ID" value="NC_007643.1"/>
</dbReference>
<dbReference type="RefSeq" id="YP_425792.1">
    <property type="nucleotide sequence ID" value="NC_007643.1"/>
</dbReference>
<dbReference type="SMR" id="Q2RWJ0"/>
<dbReference type="STRING" id="269796.Rru_A0701"/>
<dbReference type="EnsemblBacteria" id="ABC21505">
    <property type="protein sequence ID" value="ABC21505"/>
    <property type="gene ID" value="Rru_A0701"/>
</dbReference>
<dbReference type="KEGG" id="rru:Rru_A0701"/>
<dbReference type="PATRIC" id="fig|269796.9.peg.753"/>
<dbReference type="eggNOG" id="COG0522">
    <property type="taxonomic scope" value="Bacteria"/>
</dbReference>
<dbReference type="HOGENOM" id="CLU_092403_0_0_5"/>
<dbReference type="PhylomeDB" id="Q2RWJ0"/>
<dbReference type="Proteomes" id="UP000001929">
    <property type="component" value="Chromosome"/>
</dbReference>
<dbReference type="GO" id="GO:0015935">
    <property type="term" value="C:small ribosomal subunit"/>
    <property type="evidence" value="ECO:0007669"/>
    <property type="project" value="InterPro"/>
</dbReference>
<dbReference type="GO" id="GO:0019843">
    <property type="term" value="F:rRNA binding"/>
    <property type="evidence" value="ECO:0007669"/>
    <property type="project" value="UniProtKB-UniRule"/>
</dbReference>
<dbReference type="GO" id="GO:0003735">
    <property type="term" value="F:structural constituent of ribosome"/>
    <property type="evidence" value="ECO:0007669"/>
    <property type="project" value="InterPro"/>
</dbReference>
<dbReference type="GO" id="GO:0042274">
    <property type="term" value="P:ribosomal small subunit biogenesis"/>
    <property type="evidence" value="ECO:0007669"/>
    <property type="project" value="TreeGrafter"/>
</dbReference>
<dbReference type="GO" id="GO:0006412">
    <property type="term" value="P:translation"/>
    <property type="evidence" value="ECO:0007669"/>
    <property type="project" value="UniProtKB-UniRule"/>
</dbReference>
<dbReference type="CDD" id="cd00165">
    <property type="entry name" value="S4"/>
    <property type="match status" value="1"/>
</dbReference>
<dbReference type="FunFam" id="3.10.290.10:FF:000001">
    <property type="entry name" value="30S ribosomal protein S4"/>
    <property type="match status" value="1"/>
</dbReference>
<dbReference type="Gene3D" id="1.10.1050.10">
    <property type="entry name" value="Ribosomal Protein S4 Delta 41, Chain A, domain 1"/>
    <property type="match status" value="1"/>
</dbReference>
<dbReference type="Gene3D" id="3.10.290.10">
    <property type="entry name" value="RNA-binding S4 domain"/>
    <property type="match status" value="1"/>
</dbReference>
<dbReference type="HAMAP" id="MF_01306_B">
    <property type="entry name" value="Ribosomal_uS4_B"/>
    <property type="match status" value="1"/>
</dbReference>
<dbReference type="InterPro" id="IPR022801">
    <property type="entry name" value="Ribosomal_uS4"/>
</dbReference>
<dbReference type="InterPro" id="IPR005709">
    <property type="entry name" value="Ribosomal_uS4_bac-type"/>
</dbReference>
<dbReference type="InterPro" id="IPR018079">
    <property type="entry name" value="Ribosomal_uS4_CS"/>
</dbReference>
<dbReference type="InterPro" id="IPR001912">
    <property type="entry name" value="Ribosomal_uS4_N"/>
</dbReference>
<dbReference type="InterPro" id="IPR002942">
    <property type="entry name" value="S4_RNA-bd"/>
</dbReference>
<dbReference type="InterPro" id="IPR036986">
    <property type="entry name" value="S4_RNA-bd_sf"/>
</dbReference>
<dbReference type="NCBIfam" id="NF003717">
    <property type="entry name" value="PRK05327.1"/>
    <property type="match status" value="1"/>
</dbReference>
<dbReference type="NCBIfam" id="TIGR01017">
    <property type="entry name" value="rpsD_bact"/>
    <property type="match status" value="1"/>
</dbReference>
<dbReference type="PANTHER" id="PTHR11831">
    <property type="entry name" value="30S 40S RIBOSOMAL PROTEIN"/>
    <property type="match status" value="1"/>
</dbReference>
<dbReference type="PANTHER" id="PTHR11831:SF4">
    <property type="entry name" value="SMALL RIBOSOMAL SUBUNIT PROTEIN US4M"/>
    <property type="match status" value="1"/>
</dbReference>
<dbReference type="Pfam" id="PF00163">
    <property type="entry name" value="Ribosomal_S4"/>
    <property type="match status" value="1"/>
</dbReference>
<dbReference type="Pfam" id="PF01479">
    <property type="entry name" value="S4"/>
    <property type="match status" value="1"/>
</dbReference>
<dbReference type="SMART" id="SM01390">
    <property type="entry name" value="Ribosomal_S4"/>
    <property type="match status" value="1"/>
</dbReference>
<dbReference type="SMART" id="SM00363">
    <property type="entry name" value="S4"/>
    <property type="match status" value="1"/>
</dbReference>
<dbReference type="SUPFAM" id="SSF55174">
    <property type="entry name" value="Alpha-L RNA-binding motif"/>
    <property type="match status" value="1"/>
</dbReference>
<dbReference type="PROSITE" id="PS00632">
    <property type="entry name" value="RIBOSOMAL_S4"/>
    <property type="match status" value="1"/>
</dbReference>
<dbReference type="PROSITE" id="PS50889">
    <property type="entry name" value="S4"/>
    <property type="match status" value="1"/>
</dbReference>
<reference key="1">
    <citation type="journal article" date="2011" name="Stand. Genomic Sci.">
        <title>Complete genome sequence of Rhodospirillum rubrum type strain (S1).</title>
        <authorList>
            <person name="Munk A.C."/>
            <person name="Copeland A."/>
            <person name="Lucas S."/>
            <person name="Lapidus A."/>
            <person name="Del Rio T.G."/>
            <person name="Barry K."/>
            <person name="Detter J.C."/>
            <person name="Hammon N."/>
            <person name="Israni S."/>
            <person name="Pitluck S."/>
            <person name="Brettin T."/>
            <person name="Bruce D."/>
            <person name="Han C."/>
            <person name="Tapia R."/>
            <person name="Gilna P."/>
            <person name="Schmutz J."/>
            <person name="Larimer F."/>
            <person name="Land M."/>
            <person name="Kyrpides N.C."/>
            <person name="Mavromatis K."/>
            <person name="Richardson P."/>
            <person name="Rohde M."/>
            <person name="Goeker M."/>
            <person name="Klenk H.P."/>
            <person name="Zhang Y."/>
            <person name="Roberts G.P."/>
            <person name="Reslewic S."/>
            <person name="Schwartz D.C."/>
        </authorList>
    </citation>
    <scope>NUCLEOTIDE SEQUENCE [LARGE SCALE GENOMIC DNA]</scope>
    <source>
        <strain>ATCC 11170 / ATH 1.1.1 / DSM 467 / LMG 4362 / NCIMB 8255 / S1</strain>
    </source>
</reference>